<keyword id="KW-0067">ATP-binding</keyword>
<keyword id="KW-1015">Disulfide bond</keyword>
<keyword id="KW-0325">Glycoprotein</keyword>
<keyword id="KW-0393">Immunoglobulin domain</keyword>
<keyword id="KW-0418">Kinase</keyword>
<keyword id="KW-0472">Membrane</keyword>
<keyword id="KW-0547">Nucleotide-binding</keyword>
<keyword id="KW-0597">Phosphoprotein</keyword>
<keyword id="KW-0675">Receptor</keyword>
<keyword id="KW-1185">Reference proteome</keyword>
<keyword id="KW-0677">Repeat</keyword>
<keyword id="KW-0732">Signal</keyword>
<keyword id="KW-0808">Transferase</keyword>
<keyword id="KW-0812">Transmembrane</keyword>
<keyword id="KW-1133">Transmembrane helix</keyword>
<keyword id="KW-0829">Tyrosine-protein kinase</keyword>
<gene>
    <name type="primary">FGFR</name>
</gene>
<dbReference type="EC" id="2.7.10.1"/>
<dbReference type="EMBL" id="AY193769">
    <property type="protein sequence ID" value="AAO39416.1"/>
    <property type="molecule type" value="mRNA"/>
</dbReference>
<dbReference type="RefSeq" id="NP_001296694.1">
    <property type="nucleotide sequence ID" value="NM_001309765.1"/>
</dbReference>
<dbReference type="SMR" id="Q86PM4"/>
<dbReference type="GlyCosmos" id="Q86PM4">
    <property type="glycosylation" value="9 sites, No reported glycans"/>
</dbReference>
<dbReference type="EnsemblMetazoa" id="NM_001309765.1">
    <property type="protein sequence ID" value="NP_001296694.1"/>
    <property type="gene ID" value="LOC100206525"/>
</dbReference>
<dbReference type="GeneID" id="100206525"/>
<dbReference type="KEGG" id="hmg:100206525"/>
<dbReference type="OrthoDB" id="5984265at2759"/>
<dbReference type="Proteomes" id="UP000694840">
    <property type="component" value="Unplaced"/>
</dbReference>
<dbReference type="GO" id="GO:0005886">
    <property type="term" value="C:plasma membrane"/>
    <property type="evidence" value="ECO:0007669"/>
    <property type="project" value="TreeGrafter"/>
</dbReference>
<dbReference type="GO" id="GO:0043235">
    <property type="term" value="C:receptor complex"/>
    <property type="evidence" value="ECO:0007669"/>
    <property type="project" value="TreeGrafter"/>
</dbReference>
<dbReference type="GO" id="GO:0005524">
    <property type="term" value="F:ATP binding"/>
    <property type="evidence" value="ECO:0007669"/>
    <property type="project" value="UniProtKB-KW"/>
</dbReference>
<dbReference type="GO" id="GO:0005007">
    <property type="term" value="F:fibroblast growth factor receptor activity"/>
    <property type="evidence" value="ECO:0007669"/>
    <property type="project" value="InterPro"/>
</dbReference>
<dbReference type="GO" id="GO:0008284">
    <property type="term" value="P:positive regulation of cell population proliferation"/>
    <property type="evidence" value="ECO:0007669"/>
    <property type="project" value="InterPro"/>
</dbReference>
<dbReference type="CDD" id="cd00096">
    <property type="entry name" value="Ig"/>
    <property type="match status" value="1"/>
</dbReference>
<dbReference type="CDD" id="cd05053">
    <property type="entry name" value="PTKc_FGFR"/>
    <property type="match status" value="1"/>
</dbReference>
<dbReference type="FunFam" id="1.10.510.10:FF:000007">
    <property type="entry name" value="Fibroblast growth factor receptor"/>
    <property type="match status" value="1"/>
</dbReference>
<dbReference type="Gene3D" id="2.60.40.10">
    <property type="entry name" value="Immunoglobulins"/>
    <property type="match status" value="2"/>
</dbReference>
<dbReference type="Gene3D" id="3.30.200.20">
    <property type="entry name" value="Phosphorylase Kinase, domain 1"/>
    <property type="match status" value="1"/>
</dbReference>
<dbReference type="Gene3D" id="1.10.510.10">
    <property type="entry name" value="Transferase(Phosphotransferase) domain 1"/>
    <property type="match status" value="1"/>
</dbReference>
<dbReference type="InterPro" id="IPR016248">
    <property type="entry name" value="FGF_rcpt_fam"/>
</dbReference>
<dbReference type="InterPro" id="IPR007110">
    <property type="entry name" value="Ig-like_dom"/>
</dbReference>
<dbReference type="InterPro" id="IPR036179">
    <property type="entry name" value="Ig-like_dom_sf"/>
</dbReference>
<dbReference type="InterPro" id="IPR013783">
    <property type="entry name" value="Ig-like_fold"/>
</dbReference>
<dbReference type="InterPro" id="IPR013098">
    <property type="entry name" value="Ig_I-set"/>
</dbReference>
<dbReference type="InterPro" id="IPR003599">
    <property type="entry name" value="Ig_sub"/>
</dbReference>
<dbReference type="InterPro" id="IPR003598">
    <property type="entry name" value="Ig_sub2"/>
</dbReference>
<dbReference type="InterPro" id="IPR011009">
    <property type="entry name" value="Kinase-like_dom_sf"/>
</dbReference>
<dbReference type="InterPro" id="IPR000719">
    <property type="entry name" value="Prot_kinase_dom"/>
</dbReference>
<dbReference type="InterPro" id="IPR017441">
    <property type="entry name" value="Protein_kinase_ATP_BS"/>
</dbReference>
<dbReference type="InterPro" id="IPR050122">
    <property type="entry name" value="RTK"/>
</dbReference>
<dbReference type="InterPro" id="IPR001245">
    <property type="entry name" value="Ser-Thr/Tyr_kinase_cat_dom"/>
</dbReference>
<dbReference type="InterPro" id="IPR008266">
    <property type="entry name" value="Tyr_kinase_AS"/>
</dbReference>
<dbReference type="InterPro" id="IPR020635">
    <property type="entry name" value="Tyr_kinase_cat_dom"/>
</dbReference>
<dbReference type="PANTHER" id="PTHR24416:SF550">
    <property type="entry name" value="FIBROBLAST GROWTH FACTOR RECEPTOR HOMOLOG 1-RELATED"/>
    <property type="match status" value="1"/>
</dbReference>
<dbReference type="PANTHER" id="PTHR24416">
    <property type="entry name" value="TYROSINE-PROTEIN KINASE RECEPTOR"/>
    <property type="match status" value="1"/>
</dbReference>
<dbReference type="Pfam" id="PF07679">
    <property type="entry name" value="I-set"/>
    <property type="match status" value="1"/>
</dbReference>
<dbReference type="Pfam" id="PF07714">
    <property type="entry name" value="PK_Tyr_Ser-Thr"/>
    <property type="match status" value="1"/>
</dbReference>
<dbReference type="PIRSF" id="PIRSF000628">
    <property type="entry name" value="FGFR"/>
    <property type="match status" value="1"/>
</dbReference>
<dbReference type="PRINTS" id="PR00109">
    <property type="entry name" value="TYRKINASE"/>
</dbReference>
<dbReference type="SMART" id="SM00409">
    <property type="entry name" value="IG"/>
    <property type="match status" value="3"/>
</dbReference>
<dbReference type="SMART" id="SM00408">
    <property type="entry name" value="IGc2"/>
    <property type="match status" value="1"/>
</dbReference>
<dbReference type="SMART" id="SM00219">
    <property type="entry name" value="TyrKc"/>
    <property type="match status" value="1"/>
</dbReference>
<dbReference type="SUPFAM" id="SSF48726">
    <property type="entry name" value="Immunoglobulin"/>
    <property type="match status" value="2"/>
</dbReference>
<dbReference type="SUPFAM" id="SSF56112">
    <property type="entry name" value="Protein kinase-like (PK-like)"/>
    <property type="match status" value="1"/>
</dbReference>
<dbReference type="PROSITE" id="PS50835">
    <property type="entry name" value="IG_LIKE"/>
    <property type="match status" value="2"/>
</dbReference>
<dbReference type="PROSITE" id="PS00107">
    <property type="entry name" value="PROTEIN_KINASE_ATP"/>
    <property type="match status" value="1"/>
</dbReference>
<dbReference type="PROSITE" id="PS50011">
    <property type="entry name" value="PROTEIN_KINASE_DOM"/>
    <property type="match status" value="1"/>
</dbReference>
<dbReference type="PROSITE" id="PS00109">
    <property type="entry name" value="PROTEIN_KINASE_TYR"/>
    <property type="match status" value="1"/>
</dbReference>
<accession>Q86PM4</accession>
<feature type="signal peptide" evidence="2">
    <location>
        <begin position="1"/>
        <end position="19"/>
    </location>
</feature>
<feature type="chain" id="PRO_0000249211" description="Fibroblast growth factor receptor">
    <location>
        <begin position="20"/>
        <end position="816"/>
    </location>
</feature>
<feature type="topological domain" description="Extracellular" evidence="2">
    <location>
        <begin position="20"/>
        <end position="370"/>
    </location>
</feature>
<feature type="transmembrane region" description="Helical" evidence="2">
    <location>
        <begin position="371"/>
        <end position="391"/>
    </location>
</feature>
<feature type="topological domain" description="Cytoplasmic" evidence="2">
    <location>
        <begin position="392"/>
        <end position="816"/>
    </location>
</feature>
<feature type="domain" description="Ig-like C2-type 1">
    <location>
        <begin position="25"/>
        <end position="105"/>
    </location>
</feature>
<feature type="domain" description="Ig-like C2-type 2">
    <location>
        <begin position="126"/>
        <end position="217"/>
    </location>
</feature>
<feature type="domain" description="Protein kinase" evidence="4">
    <location>
        <begin position="474"/>
        <end position="747"/>
    </location>
</feature>
<feature type="active site" description="Proton acceptor" evidence="4 5">
    <location>
        <position position="612"/>
    </location>
</feature>
<feature type="binding site" evidence="4">
    <location>
        <begin position="480"/>
        <end position="488"/>
    </location>
    <ligand>
        <name>ATP</name>
        <dbReference type="ChEBI" id="CHEBI:30616"/>
    </ligand>
</feature>
<feature type="binding site" evidence="4">
    <location>
        <position position="508"/>
    </location>
    <ligand>
        <name>ATP</name>
        <dbReference type="ChEBI" id="CHEBI:30616"/>
    </ligand>
</feature>
<feature type="modified residue" description="Phosphotyrosine; by autocatalysis" evidence="1">
    <location>
        <position position="643"/>
    </location>
</feature>
<feature type="glycosylation site" description="N-linked (GlcNAc...) asparagine" evidence="2">
    <location>
        <position position="21"/>
    </location>
</feature>
<feature type="glycosylation site" description="N-linked (GlcNAc...) asparagine" evidence="2">
    <location>
        <position position="69"/>
    </location>
</feature>
<feature type="glycosylation site" description="N-linked (GlcNAc...) asparagine" evidence="2">
    <location>
        <position position="119"/>
    </location>
</feature>
<feature type="glycosylation site" description="N-linked (GlcNAc...) asparagine" evidence="2">
    <location>
        <position position="156"/>
    </location>
</feature>
<feature type="glycosylation site" description="N-linked (GlcNAc...) asparagine" evidence="2">
    <location>
        <position position="171"/>
    </location>
</feature>
<feature type="glycosylation site" description="N-linked (GlcNAc...) asparagine" evidence="2">
    <location>
        <position position="244"/>
    </location>
</feature>
<feature type="glycosylation site" description="N-linked (GlcNAc...) asparagine" evidence="2">
    <location>
        <position position="274"/>
    </location>
</feature>
<feature type="glycosylation site" description="N-linked (GlcNAc...) asparagine" evidence="2">
    <location>
        <position position="313"/>
    </location>
</feature>
<feature type="glycosylation site" description="N-linked (GlcNAc...) asparagine" evidence="2">
    <location>
        <position position="321"/>
    </location>
</feature>
<feature type="disulfide bond" evidence="3">
    <location>
        <begin position="43"/>
        <end position="94"/>
    </location>
</feature>
<feature type="disulfide bond" evidence="3">
    <location>
        <begin position="147"/>
        <end position="201"/>
    </location>
</feature>
<name>FGFR_HYDVU</name>
<reference key="1">
    <citation type="journal article" date="2004" name="Development">
        <title>Signalling by the FGFR-like tyrosine kinase, Kringelchen, is essential for bud detachment in Hydra vulgaris.</title>
        <authorList>
            <person name="Sudhop S."/>
            <person name="Coulier F."/>
            <person name="Bieller A."/>
            <person name="Vogt A."/>
            <person name="Hotz T."/>
            <person name="Hassel M."/>
        </authorList>
    </citation>
    <scope>NUCLEOTIDE SEQUENCE [MRNA]</scope>
    <scope>DEVELOPMENTAL STAGE</scope>
</reference>
<proteinExistence type="evidence at transcript level"/>
<evidence type="ECO:0000250" key="1"/>
<evidence type="ECO:0000255" key="2"/>
<evidence type="ECO:0000255" key="3">
    <source>
        <dbReference type="PROSITE-ProRule" id="PRU00114"/>
    </source>
</evidence>
<evidence type="ECO:0000255" key="4">
    <source>
        <dbReference type="PROSITE-ProRule" id="PRU00159"/>
    </source>
</evidence>
<evidence type="ECO:0000255" key="5">
    <source>
        <dbReference type="PROSITE-ProRule" id="PRU10028"/>
    </source>
</evidence>
<evidence type="ECO:0000269" key="6">
    <source>
    </source>
</evidence>
<evidence type="ECO:0000305" key="7"/>
<organism>
    <name type="scientific">Hydra vulgaris</name>
    <name type="common">Hydra</name>
    <name type="synonym">Hydra attenuata</name>
    <dbReference type="NCBI Taxonomy" id="6087"/>
    <lineage>
        <taxon>Eukaryota</taxon>
        <taxon>Metazoa</taxon>
        <taxon>Cnidaria</taxon>
        <taxon>Hydrozoa</taxon>
        <taxon>Hydroidolina</taxon>
        <taxon>Anthoathecata</taxon>
        <taxon>Aplanulata</taxon>
        <taxon>Hydridae</taxon>
        <taxon>Hydra</taxon>
    </lineage>
</organism>
<protein>
    <recommendedName>
        <fullName>Fibroblast growth factor receptor</fullName>
        <ecNumber>2.7.10.1</ecNumber>
    </recommendedName>
    <alternativeName>
        <fullName>Protein kringelchen</fullName>
    </alternativeName>
</protein>
<comment type="function">
    <text evidence="7">Receptor for basic fibroblast growth factor.</text>
</comment>
<comment type="catalytic activity">
    <reaction evidence="5">
        <text>L-tyrosyl-[protein] + ATP = O-phospho-L-tyrosyl-[protein] + ADP + H(+)</text>
        <dbReference type="Rhea" id="RHEA:10596"/>
        <dbReference type="Rhea" id="RHEA-COMP:10136"/>
        <dbReference type="Rhea" id="RHEA-COMP:20101"/>
        <dbReference type="ChEBI" id="CHEBI:15378"/>
        <dbReference type="ChEBI" id="CHEBI:30616"/>
        <dbReference type="ChEBI" id="CHEBI:46858"/>
        <dbReference type="ChEBI" id="CHEBI:61978"/>
        <dbReference type="ChEBI" id="CHEBI:456216"/>
        <dbReference type="EC" id="2.7.10.1"/>
    </reaction>
</comment>
<comment type="subcellular location">
    <subcellularLocation>
        <location evidence="7">Membrane</location>
        <topology evidence="7">Single-pass membrane protein</topology>
    </subcellularLocation>
</comment>
<comment type="developmental stage">
    <text evidence="6">During tissue displacement in the early bud, transiently present ubiquitously. A few hours later, coincident with the acquisition of organiser properties by the bud tip, a few cells in the apical tip express the gene strongly. About 20 hours after the onset of evagination, expression is switched on in a ring of cells surrounding the bud base, and shortly thereafter vanishes from the apical expression zone. The basal ring persists in the parent during tissue contraction and foot formation in the young polyp, until several hours after bud detachment. Inhibition of bud detachment by head regeneration results in severe distortion, disruption or even complete loss of the well-defined ring-like expression zone.</text>
</comment>
<comment type="similarity">
    <text evidence="4">Belongs to the protein kinase superfamily. Tyr protein kinase family. Fibroblast growth factor receptor subfamily.</text>
</comment>
<sequence length="816" mass="93395">MISDWCVVLVLLMSRLVFGLNFTEPVNYILKLGEDSSSRLLDCSVNLPVELIKKIDWTHNDIVINNKPNITLSENGQKLVIAHYQSHNSGRYGCKVTAMNEESVQRVFDLLPASETEGNQTIEMMLRIKNDISLLVELVMNKLDLDCTAVGASPINITWIKNDRLIEARSNLSNFRYSFSPNFLKLSIKELRLDDAGIYKCILENKYGKIEHIMTVEIYEKMFSKPIVSSTDKHKVFYVNYGQNLTVPIYVTAFLPHPHFQMLYVYSMTSPNTNETKLALRVLPTMRELTVLEKGQRRGNSISHIKLDYFFNNISEQDFGNYTFMAGNKYGFDIYPFQILHTKYMQTTVFPPMKSSINKIYKEESVEKTVIFIVITSMLAGLIFVAFVIFFICRVRSKDKFKNSNINYIKPLETVILNLGDNNTSGVTMVTSVSASYASRRFRHSLNNNLINDKQKLNLKIAPDPAWEIKLEQLETDCLLGEGAFGRVFRATARDLPNHTGVQTVAVKMLKEDCCEQDLKDFISEIEVMKSIGKHINILNLLAVSSQQGKLYIVVEYCRHGNLRSFLKDNRPVMQANSVITKKITLYDLTSFCLQVARGMNFLASKKCIHRDIAARNVLVGEGYLMKIADFGLARDIHEQDYYRKCTDGRLPVKWMAIEALFDRVYTTQSDIWSFGILAWEIVTFGGSPYPGIALEKLFDLLKQGYRMERPLNCTDDMYTLMLNCWKEIPSKRPTFSQLIEDLERMLLDASSTEYIDLQPIQPERTESFSTSLHTSASMLNTDLHEKNKCDHDEISFTHEDGLSEADILLSHYAVS</sequence>